<dbReference type="EMBL" id="X51338">
    <property type="protein sequence ID" value="CAA35719.1"/>
    <property type="molecule type" value="Genomic_DNA"/>
</dbReference>
<dbReference type="PIR" id="JQ1051">
    <property type="entry name" value="JQ1051"/>
</dbReference>
<dbReference type="RefSeq" id="WP_032488587.1">
    <property type="nucleotide sequence ID" value="NZ_VCBD01000008.1"/>
</dbReference>
<dbReference type="SMR" id="P27875"/>
<dbReference type="eggNOG" id="COG0006">
    <property type="taxonomic scope" value="Bacteria"/>
</dbReference>
<dbReference type="CDD" id="cd01066">
    <property type="entry name" value="APP_MetAP"/>
    <property type="match status" value="1"/>
</dbReference>
<dbReference type="Gene3D" id="3.90.230.10">
    <property type="entry name" value="Creatinase/methionine aminopeptidase superfamily"/>
    <property type="match status" value="1"/>
</dbReference>
<dbReference type="Gene3D" id="3.40.350.10">
    <property type="entry name" value="Creatinase/prolidase N-terminal domain"/>
    <property type="match status" value="1"/>
</dbReference>
<dbReference type="InterPro" id="IPR029149">
    <property type="entry name" value="Creatin/AminoP/Spt16_N"/>
</dbReference>
<dbReference type="InterPro" id="IPR036005">
    <property type="entry name" value="Creatinase/aminopeptidase-like"/>
</dbReference>
<dbReference type="InterPro" id="IPR000587">
    <property type="entry name" value="Creatinase_N"/>
</dbReference>
<dbReference type="InterPro" id="IPR000994">
    <property type="entry name" value="Pept_M24"/>
</dbReference>
<dbReference type="InterPro" id="IPR050659">
    <property type="entry name" value="Peptidase_M24B"/>
</dbReference>
<dbReference type="PANTHER" id="PTHR46112">
    <property type="entry name" value="AMINOPEPTIDASE"/>
    <property type="match status" value="1"/>
</dbReference>
<dbReference type="PANTHER" id="PTHR46112:SF3">
    <property type="entry name" value="AMINOPEPTIDASE YPDF"/>
    <property type="match status" value="1"/>
</dbReference>
<dbReference type="Pfam" id="PF01321">
    <property type="entry name" value="Creatinase_N"/>
    <property type="match status" value="1"/>
</dbReference>
<dbReference type="Pfam" id="PF00557">
    <property type="entry name" value="Peptidase_M24"/>
    <property type="match status" value="1"/>
</dbReference>
<dbReference type="SUPFAM" id="SSF55920">
    <property type="entry name" value="Creatinase/aminopeptidase"/>
    <property type="match status" value="1"/>
</dbReference>
<dbReference type="SUPFAM" id="SSF53092">
    <property type="entry name" value="Creatinase/prolidase N-terminal domain"/>
    <property type="match status" value="1"/>
</dbReference>
<accession>P27875</accession>
<organism>
    <name type="scientific">Rhizobium rhizogenes</name>
    <name type="common">Agrobacterium rhizogenes</name>
    <dbReference type="NCBI Taxonomy" id="359"/>
    <lineage>
        <taxon>Bacteria</taxon>
        <taxon>Pseudomonadati</taxon>
        <taxon>Pseudomonadota</taxon>
        <taxon>Alphaproteobacteria</taxon>
        <taxon>Hyphomicrobiales</taxon>
        <taxon>Rhizobiaceae</taxon>
        <taxon>Rhizobium/Agrobacterium group</taxon>
        <taxon>Rhizobium</taxon>
    </lineage>
</organism>
<evidence type="ECO:0000305" key="1"/>
<protein>
    <recommendedName>
        <fullName>Agropine synthesis cyclase</fullName>
    </recommendedName>
</protein>
<gene>
    <name type="primary">ags</name>
</gene>
<name>AGS_RHIRH</name>
<comment type="similarity">
    <text evidence="1">Belongs to the peptidase M24B family.</text>
</comment>
<feature type="chain" id="PRO_0000185100" description="Agropine synthesis cyclase">
    <location>
        <begin position="1"/>
        <end position="396"/>
    </location>
</feature>
<proteinExistence type="inferred from homology"/>
<keyword id="KW-0614">Plasmid</keyword>
<geneLocation type="plasmid">
    <name>pRiA4b</name>
</geneLocation>
<sequence>MRVNDSPSDEVYQTRLQGAQTAMKRAGIDVLALSGPDFHNYFAGLWGLPVGRPVWFVLQQYGKPAFVAPRSEAREISARCKTPVAVEWVEWEGPIAAPMTNQDALAQYTRGIAPNPGLIGLDFNCTSGANVELVRQALGAEHIKDVTPMLQELWACKDAAGIAAIRQSCDIVREQFLACRNAIAPGIPEWKVTLASVTAAIERNGELLAEDEELPRFWPHQLNMVGSGADRTARCHPSGGGRIMQDGAIAQICLCGQTFRGHAACFDRPVPIGSKPLPANLRKVIDVAREAQSAALAALRPGVTAGEIHAAAVAVIKRSGWEAPFLHRTGRGIGYSDWDGIELKAGSQTVLEVGNVLSIEPGVYVQGIGGARFGDTVLVSETGYEVLTPFDLGRNI</sequence>
<reference key="1">
    <citation type="journal article" date="1991" name="Plasmid">
        <title>Organization of the agropine synthesis region of the T-DNA of the Ri plasmid from Agrobacterium rhizogenes.</title>
        <authorList>
            <person name="Bouchez D."/>
            <person name="Tourneur J."/>
        </authorList>
    </citation>
    <scope>NUCLEOTIDE SEQUENCE [GENOMIC DNA]</scope>
    <source>
        <strain>A4</strain>
    </source>
</reference>